<evidence type="ECO:0000250" key="1"/>
<evidence type="ECO:0000255" key="2">
    <source>
        <dbReference type="PROSITE-ProRule" id="PRU00981"/>
    </source>
</evidence>
<evidence type="ECO:0000256" key="3">
    <source>
        <dbReference type="SAM" id="MobiDB-lite"/>
    </source>
</evidence>
<evidence type="ECO:0000269" key="4">
    <source>
    </source>
</evidence>
<evidence type="ECO:0000305" key="5"/>
<proteinExistence type="uncertain"/>
<protein>
    <recommendedName>
        <fullName>Putative myc-like protein MYCLP1</fullName>
    </recommendedName>
    <alternativeName>
        <fullName>Protein L-Myc-2</fullName>
    </alternativeName>
    <alternativeName>
        <fullName>V-myc myelocytomatosis viral oncogene homolog pseudogene 1</fullName>
    </alternativeName>
</protein>
<organism>
    <name type="scientific">Homo sapiens</name>
    <name type="common">Human</name>
    <dbReference type="NCBI Taxonomy" id="9606"/>
    <lineage>
        <taxon>Eukaryota</taxon>
        <taxon>Metazoa</taxon>
        <taxon>Chordata</taxon>
        <taxon>Craniata</taxon>
        <taxon>Vertebrata</taxon>
        <taxon>Euteleostomi</taxon>
        <taxon>Mammalia</taxon>
        <taxon>Eutheria</taxon>
        <taxon>Euarchontoglires</taxon>
        <taxon>Primates</taxon>
        <taxon>Haplorrhini</taxon>
        <taxon>Catarrhini</taxon>
        <taxon>Hominidae</taxon>
        <taxon>Homo</taxon>
    </lineage>
</organism>
<gene>
    <name type="primary">MYCLP1</name>
    <name type="synonym">MYCL1P1</name>
    <name type="synonym">MYCL2</name>
</gene>
<sequence length="358" mass="40868">MDRDSYHHYFYDYDGGEDFYRSTTPSEDIWKKFELVPPPWDLGPAAGNPALSFGLLEPWPVGCAGDETESQDYWKAWDANYASLIRRDCMWSGFSTQEPLERAVSDLLAVGAPSGYSPKEFATPDYTPELEAGNLAPIFPCLLGEPKIQACSRSESPSDSEGEEIDVTVKKRQSLSTRKPVIIAVRADLLDPRMNLFHISIHQQQHNYAAPFPPESCFQEGAPKRMPPKEALEREAPGGKDDKEDEEIVSLPPVESEAAQSCQPKPIHYDTENWTKKKYHSYLERKRRNDQRSRFLALRDEVPALASCSRVSKVMILVKATEYLHELAEAEERMATEKRQLECQRRQLQKRIEYLSSY</sequence>
<name>MYCP1_HUMAN</name>
<keyword id="KW-0238">DNA-binding</keyword>
<keyword id="KW-0539">Nucleus</keyword>
<keyword id="KW-1185">Reference proteome</keyword>
<accession>P12525</accession>
<accession>O43372</accession>
<comment type="subunit">
    <text evidence="1">Efficient DNA binding requires dimerization with another bHLH protein. Binds DNA as a heterodimer with MAX (By similarity).</text>
</comment>
<comment type="subcellular location">
    <subcellularLocation>
        <location evidence="2">Nucleus</location>
    </subcellularLocation>
</comment>
<comment type="tissue specificity">
    <text evidence="4">Detected in adult testis.</text>
</comment>
<comment type="caution">
    <text evidence="5">Could be the product of a pseudogene.</text>
</comment>
<comment type="sequence caution" evidence="5">
    <conflict type="frameshift">
        <sequence resource="EMBL-CDS" id="AAA59883"/>
    </conflict>
</comment>
<reference key="1">
    <citation type="journal article" date="1989" name="Genomics">
        <title>Mapping and characterization of an X-linked processed gene related to MYCL1.</title>
        <authorList>
            <person name="Morton C.C."/>
            <person name="Nussenzweig M.C."/>
            <person name="Sousa R."/>
            <person name="Sorenson G.D."/>
            <person name="Pettengill O.S."/>
            <person name="Shows T.B."/>
        </authorList>
    </citation>
    <scope>NUCLEOTIDE SEQUENCE [GENOMIC DNA]</scope>
</reference>
<reference key="2">
    <citation type="journal article" date="1991" name="Nucleic Acids Res.">
        <title>Testis-specific expression of the human MYCL2 gene.</title>
        <authorList>
            <person name="Robertson N.G."/>
            <person name="Pomponio R.J."/>
            <person name="Mutter G.L."/>
            <person name="Morton C.C."/>
        </authorList>
    </citation>
    <scope>NUCLEOTIDE SEQUENCE [GENOMIC DNA] OF 273-354</scope>
    <scope>TISSUE SPECIFICITY</scope>
</reference>
<reference key="3">
    <citation type="journal article" date="2005" name="Nature">
        <title>The DNA sequence of the human X chromosome.</title>
        <authorList>
            <person name="Ross M.T."/>
            <person name="Grafham D.V."/>
            <person name="Coffey A.J."/>
            <person name="Scherer S."/>
            <person name="McLay K."/>
            <person name="Muzny D."/>
            <person name="Platzer M."/>
            <person name="Howell G.R."/>
            <person name="Burrows C."/>
            <person name="Bird C.P."/>
            <person name="Frankish A."/>
            <person name="Lovell F.L."/>
            <person name="Howe K.L."/>
            <person name="Ashurst J.L."/>
            <person name="Fulton R.S."/>
            <person name="Sudbrak R."/>
            <person name="Wen G."/>
            <person name="Jones M.C."/>
            <person name="Hurles M.E."/>
            <person name="Andrews T.D."/>
            <person name="Scott C.E."/>
            <person name="Searle S."/>
            <person name="Ramser J."/>
            <person name="Whittaker A."/>
            <person name="Deadman R."/>
            <person name="Carter N.P."/>
            <person name="Hunt S.E."/>
            <person name="Chen R."/>
            <person name="Cree A."/>
            <person name="Gunaratne P."/>
            <person name="Havlak P."/>
            <person name="Hodgson A."/>
            <person name="Metzker M.L."/>
            <person name="Richards S."/>
            <person name="Scott G."/>
            <person name="Steffen D."/>
            <person name="Sodergren E."/>
            <person name="Wheeler D.A."/>
            <person name="Worley K.C."/>
            <person name="Ainscough R."/>
            <person name="Ambrose K.D."/>
            <person name="Ansari-Lari M.A."/>
            <person name="Aradhya S."/>
            <person name="Ashwell R.I."/>
            <person name="Babbage A.K."/>
            <person name="Bagguley C.L."/>
            <person name="Ballabio A."/>
            <person name="Banerjee R."/>
            <person name="Barker G.E."/>
            <person name="Barlow K.F."/>
            <person name="Barrett I.P."/>
            <person name="Bates K.N."/>
            <person name="Beare D.M."/>
            <person name="Beasley H."/>
            <person name="Beasley O."/>
            <person name="Beck A."/>
            <person name="Bethel G."/>
            <person name="Blechschmidt K."/>
            <person name="Brady N."/>
            <person name="Bray-Allen S."/>
            <person name="Bridgeman A.M."/>
            <person name="Brown A.J."/>
            <person name="Brown M.J."/>
            <person name="Bonnin D."/>
            <person name="Bruford E.A."/>
            <person name="Buhay C."/>
            <person name="Burch P."/>
            <person name="Burford D."/>
            <person name="Burgess J."/>
            <person name="Burrill W."/>
            <person name="Burton J."/>
            <person name="Bye J.M."/>
            <person name="Carder C."/>
            <person name="Carrel L."/>
            <person name="Chako J."/>
            <person name="Chapman J.C."/>
            <person name="Chavez D."/>
            <person name="Chen E."/>
            <person name="Chen G."/>
            <person name="Chen Y."/>
            <person name="Chen Z."/>
            <person name="Chinault C."/>
            <person name="Ciccodicola A."/>
            <person name="Clark S.Y."/>
            <person name="Clarke G."/>
            <person name="Clee C.M."/>
            <person name="Clegg S."/>
            <person name="Clerc-Blankenburg K."/>
            <person name="Clifford K."/>
            <person name="Cobley V."/>
            <person name="Cole C.G."/>
            <person name="Conquer J.S."/>
            <person name="Corby N."/>
            <person name="Connor R.E."/>
            <person name="David R."/>
            <person name="Davies J."/>
            <person name="Davis C."/>
            <person name="Davis J."/>
            <person name="Delgado O."/>
            <person name="Deshazo D."/>
            <person name="Dhami P."/>
            <person name="Ding Y."/>
            <person name="Dinh H."/>
            <person name="Dodsworth S."/>
            <person name="Draper H."/>
            <person name="Dugan-Rocha S."/>
            <person name="Dunham A."/>
            <person name="Dunn M."/>
            <person name="Durbin K.J."/>
            <person name="Dutta I."/>
            <person name="Eades T."/>
            <person name="Ellwood M."/>
            <person name="Emery-Cohen A."/>
            <person name="Errington H."/>
            <person name="Evans K.L."/>
            <person name="Faulkner L."/>
            <person name="Francis F."/>
            <person name="Frankland J."/>
            <person name="Fraser A.E."/>
            <person name="Galgoczy P."/>
            <person name="Gilbert J."/>
            <person name="Gill R."/>
            <person name="Gloeckner G."/>
            <person name="Gregory S.G."/>
            <person name="Gribble S."/>
            <person name="Griffiths C."/>
            <person name="Grocock R."/>
            <person name="Gu Y."/>
            <person name="Gwilliam R."/>
            <person name="Hamilton C."/>
            <person name="Hart E.A."/>
            <person name="Hawes A."/>
            <person name="Heath P.D."/>
            <person name="Heitmann K."/>
            <person name="Hennig S."/>
            <person name="Hernandez J."/>
            <person name="Hinzmann B."/>
            <person name="Ho S."/>
            <person name="Hoffs M."/>
            <person name="Howden P.J."/>
            <person name="Huckle E.J."/>
            <person name="Hume J."/>
            <person name="Hunt P.J."/>
            <person name="Hunt A.R."/>
            <person name="Isherwood J."/>
            <person name="Jacob L."/>
            <person name="Johnson D."/>
            <person name="Jones S."/>
            <person name="de Jong P.J."/>
            <person name="Joseph S.S."/>
            <person name="Keenan S."/>
            <person name="Kelly S."/>
            <person name="Kershaw J.K."/>
            <person name="Khan Z."/>
            <person name="Kioschis P."/>
            <person name="Klages S."/>
            <person name="Knights A.J."/>
            <person name="Kosiura A."/>
            <person name="Kovar-Smith C."/>
            <person name="Laird G.K."/>
            <person name="Langford C."/>
            <person name="Lawlor S."/>
            <person name="Leversha M."/>
            <person name="Lewis L."/>
            <person name="Liu W."/>
            <person name="Lloyd C."/>
            <person name="Lloyd D.M."/>
            <person name="Loulseged H."/>
            <person name="Loveland J.E."/>
            <person name="Lovell J.D."/>
            <person name="Lozado R."/>
            <person name="Lu J."/>
            <person name="Lyne R."/>
            <person name="Ma J."/>
            <person name="Maheshwari M."/>
            <person name="Matthews L.H."/>
            <person name="McDowall J."/>
            <person name="McLaren S."/>
            <person name="McMurray A."/>
            <person name="Meidl P."/>
            <person name="Meitinger T."/>
            <person name="Milne S."/>
            <person name="Miner G."/>
            <person name="Mistry S.L."/>
            <person name="Morgan M."/>
            <person name="Morris S."/>
            <person name="Mueller I."/>
            <person name="Mullikin J.C."/>
            <person name="Nguyen N."/>
            <person name="Nordsiek G."/>
            <person name="Nyakatura G."/>
            <person name="O'dell C.N."/>
            <person name="Okwuonu G."/>
            <person name="Palmer S."/>
            <person name="Pandian R."/>
            <person name="Parker D."/>
            <person name="Parrish J."/>
            <person name="Pasternak S."/>
            <person name="Patel D."/>
            <person name="Pearce A.V."/>
            <person name="Pearson D.M."/>
            <person name="Pelan S.E."/>
            <person name="Perez L."/>
            <person name="Porter K.M."/>
            <person name="Ramsey Y."/>
            <person name="Reichwald K."/>
            <person name="Rhodes S."/>
            <person name="Ridler K.A."/>
            <person name="Schlessinger D."/>
            <person name="Schueler M.G."/>
            <person name="Sehra H.K."/>
            <person name="Shaw-Smith C."/>
            <person name="Shen H."/>
            <person name="Sheridan E.M."/>
            <person name="Shownkeen R."/>
            <person name="Skuce C.D."/>
            <person name="Smith M.L."/>
            <person name="Sotheran E.C."/>
            <person name="Steingruber H.E."/>
            <person name="Steward C.A."/>
            <person name="Storey R."/>
            <person name="Swann R.M."/>
            <person name="Swarbreck D."/>
            <person name="Tabor P.E."/>
            <person name="Taudien S."/>
            <person name="Taylor T."/>
            <person name="Teague B."/>
            <person name="Thomas K."/>
            <person name="Thorpe A."/>
            <person name="Timms K."/>
            <person name="Tracey A."/>
            <person name="Trevanion S."/>
            <person name="Tromans A.C."/>
            <person name="d'Urso M."/>
            <person name="Verduzco D."/>
            <person name="Villasana D."/>
            <person name="Waldron L."/>
            <person name="Wall M."/>
            <person name="Wang Q."/>
            <person name="Warren J."/>
            <person name="Warry G.L."/>
            <person name="Wei X."/>
            <person name="West A."/>
            <person name="Whitehead S.L."/>
            <person name="Whiteley M.N."/>
            <person name="Wilkinson J.E."/>
            <person name="Willey D.L."/>
            <person name="Williams G."/>
            <person name="Williams L."/>
            <person name="Williamson A."/>
            <person name="Williamson H."/>
            <person name="Wilming L."/>
            <person name="Woodmansey R.L."/>
            <person name="Wray P.W."/>
            <person name="Yen J."/>
            <person name="Zhang J."/>
            <person name="Zhou J."/>
            <person name="Zoghbi H."/>
            <person name="Zorilla S."/>
            <person name="Buck D."/>
            <person name="Reinhardt R."/>
            <person name="Poustka A."/>
            <person name="Rosenthal A."/>
            <person name="Lehrach H."/>
            <person name="Meindl A."/>
            <person name="Minx P.J."/>
            <person name="Hillier L.W."/>
            <person name="Willard H.F."/>
            <person name="Wilson R.K."/>
            <person name="Waterston R.H."/>
            <person name="Rice C.M."/>
            <person name="Vaudin M."/>
            <person name="Coulson A."/>
            <person name="Nelson D.L."/>
            <person name="Weinstock G."/>
            <person name="Sulston J.E."/>
            <person name="Durbin R.M."/>
            <person name="Hubbard T."/>
            <person name="Gibbs R.A."/>
            <person name="Beck S."/>
            <person name="Rogers J."/>
            <person name="Bentley D.R."/>
        </authorList>
    </citation>
    <scope>NUCLEOTIDE SEQUENCE [LARGE SCALE GENOMIC DNA]</scope>
</reference>
<reference key="4">
    <citation type="submission" date="2005-09" db="EMBL/GenBank/DDBJ databases">
        <authorList>
            <person name="Mural R.J."/>
            <person name="Istrail S."/>
            <person name="Sutton G.G."/>
            <person name="Florea L."/>
            <person name="Halpern A.L."/>
            <person name="Mobarry C.M."/>
            <person name="Lippert R."/>
            <person name="Walenz B."/>
            <person name="Shatkay H."/>
            <person name="Dew I."/>
            <person name="Miller J.R."/>
            <person name="Flanigan M.J."/>
            <person name="Edwards N.J."/>
            <person name="Bolanos R."/>
            <person name="Fasulo D."/>
            <person name="Halldorsson B.V."/>
            <person name="Hannenhalli S."/>
            <person name="Turner R."/>
            <person name="Yooseph S."/>
            <person name="Lu F."/>
            <person name="Nusskern D.R."/>
            <person name="Shue B.C."/>
            <person name="Zheng X.H."/>
            <person name="Zhong F."/>
            <person name="Delcher A.L."/>
            <person name="Huson D.H."/>
            <person name="Kravitz S.A."/>
            <person name="Mouchard L."/>
            <person name="Reinert K."/>
            <person name="Remington K.A."/>
            <person name="Clark A.G."/>
            <person name="Waterman M.S."/>
            <person name="Eichler E.E."/>
            <person name="Adams M.D."/>
            <person name="Hunkapiller M.W."/>
            <person name="Myers E.W."/>
            <person name="Venter J.C."/>
        </authorList>
    </citation>
    <scope>NUCLEOTIDE SEQUENCE [LARGE SCALE GENOMIC DNA]</scope>
</reference>
<dbReference type="EMBL" id="J03069">
    <property type="protein sequence ID" value="AAA59883.1"/>
    <property type="status" value="ALT_FRAME"/>
    <property type="molecule type" value="Genomic_DNA"/>
</dbReference>
<dbReference type="EMBL" id="AC004081">
    <property type="protein sequence ID" value="AAB97938.1"/>
    <property type="molecule type" value="Genomic_DNA"/>
</dbReference>
<dbReference type="EMBL" id="CH471120">
    <property type="protein sequence ID" value="EAX02715.1"/>
    <property type="molecule type" value="Genomic_DNA"/>
</dbReference>
<dbReference type="PIR" id="A30146">
    <property type="entry name" value="TVHUL2"/>
</dbReference>
<dbReference type="SMR" id="P12525"/>
<dbReference type="FunCoup" id="P12525">
    <property type="interactions" value="52"/>
</dbReference>
<dbReference type="BioMuta" id="HGNC:7556"/>
<dbReference type="DMDM" id="510120775"/>
<dbReference type="jPOST" id="P12525"/>
<dbReference type="MassIVE" id="P12525"/>
<dbReference type="ProteomicsDB" id="52855"/>
<dbReference type="AGR" id="HGNC:7556"/>
<dbReference type="GeneCards" id="MYCLP1"/>
<dbReference type="HGNC" id="HGNC:7556">
    <property type="gene designation" value="MYCLP1"/>
</dbReference>
<dbReference type="MIM" id="310310">
    <property type="type" value="gene"/>
</dbReference>
<dbReference type="neXtProt" id="NX_P12525"/>
<dbReference type="InParanoid" id="P12525"/>
<dbReference type="PAN-GO" id="P12525">
    <property type="GO annotations" value="3 GO annotations based on evolutionary models"/>
</dbReference>
<dbReference type="PathwayCommons" id="P12525"/>
<dbReference type="Pharos" id="P12525">
    <property type="development level" value="Tdark"/>
</dbReference>
<dbReference type="PRO" id="PR:P12525"/>
<dbReference type="Proteomes" id="UP000005640">
    <property type="component" value="Unplaced"/>
</dbReference>
<dbReference type="RNAct" id="P12525">
    <property type="molecule type" value="protein"/>
</dbReference>
<dbReference type="GO" id="GO:0005634">
    <property type="term" value="C:nucleus"/>
    <property type="evidence" value="ECO:0007669"/>
    <property type="project" value="UniProtKB-SubCell"/>
</dbReference>
<dbReference type="GO" id="GO:0003700">
    <property type="term" value="F:DNA-binding transcription factor activity"/>
    <property type="evidence" value="ECO:0000304"/>
    <property type="project" value="ProtInc"/>
</dbReference>
<dbReference type="GO" id="GO:0000981">
    <property type="term" value="F:DNA-binding transcription factor activity, RNA polymerase II-specific"/>
    <property type="evidence" value="ECO:0000318"/>
    <property type="project" value="GO_Central"/>
</dbReference>
<dbReference type="GO" id="GO:0046983">
    <property type="term" value="F:protein dimerization activity"/>
    <property type="evidence" value="ECO:0007669"/>
    <property type="project" value="InterPro"/>
</dbReference>
<dbReference type="GO" id="GO:0000978">
    <property type="term" value="F:RNA polymerase II cis-regulatory region sequence-specific DNA binding"/>
    <property type="evidence" value="ECO:0000318"/>
    <property type="project" value="GO_Central"/>
</dbReference>
<dbReference type="GO" id="GO:0006357">
    <property type="term" value="P:regulation of transcription by RNA polymerase II"/>
    <property type="evidence" value="ECO:0000318"/>
    <property type="project" value="GO_Central"/>
</dbReference>
<dbReference type="CDD" id="cd11457">
    <property type="entry name" value="bHLHzip_L-Myc"/>
    <property type="match status" value="1"/>
</dbReference>
<dbReference type="FunFam" id="4.10.280.10:FF:000019">
    <property type="entry name" value="Myc proto-oncogene protein"/>
    <property type="match status" value="1"/>
</dbReference>
<dbReference type="Gene3D" id="4.10.280.10">
    <property type="entry name" value="Helix-loop-helix DNA-binding domain"/>
    <property type="match status" value="1"/>
</dbReference>
<dbReference type="InterPro" id="IPR011598">
    <property type="entry name" value="bHLH_dom"/>
</dbReference>
<dbReference type="InterPro" id="IPR036638">
    <property type="entry name" value="HLH_DNA-bd_sf"/>
</dbReference>
<dbReference type="InterPro" id="IPR050433">
    <property type="entry name" value="Myc_transcription_factors"/>
</dbReference>
<dbReference type="InterPro" id="IPR002418">
    <property type="entry name" value="Tscrpt_reg_Myc"/>
</dbReference>
<dbReference type="InterPro" id="IPR012682">
    <property type="entry name" value="Tscrpt_reg_Myc_N"/>
</dbReference>
<dbReference type="PANTHER" id="PTHR45851">
    <property type="entry name" value="MYC PROTO-ONCOGENE"/>
    <property type="match status" value="1"/>
</dbReference>
<dbReference type="Pfam" id="PF00010">
    <property type="entry name" value="HLH"/>
    <property type="match status" value="1"/>
</dbReference>
<dbReference type="Pfam" id="PF01056">
    <property type="entry name" value="Myc_N"/>
    <property type="match status" value="1"/>
</dbReference>
<dbReference type="PIRSF" id="PIRSF001705">
    <property type="entry name" value="Myc_protein"/>
    <property type="match status" value="1"/>
</dbReference>
<dbReference type="PRINTS" id="PR00044">
    <property type="entry name" value="LEUZIPPRMYC"/>
</dbReference>
<dbReference type="SMART" id="SM00353">
    <property type="entry name" value="HLH"/>
    <property type="match status" value="1"/>
</dbReference>
<dbReference type="SUPFAM" id="SSF47459">
    <property type="entry name" value="HLH, helix-loop-helix DNA-binding domain"/>
    <property type="match status" value="1"/>
</dbReference>
<dbReference type="PROSITE" id="PS50888">
    <property type="entry name" value="BHLH"/>
    <property type="match status" value="1"/>
</dbReference>
<feature type="chain" id="PRO_0000127335" description="Putative myc-like protein MYCLP1">
    <location>
        <begin position="1"/>
        <end position="358"/>
    </location>
</feature>
<feature type="domain" description="bHLH" evidence="2">
    <location>
        <begin position="274"/>
        <end position="326"/>
    </location>
</feature>
<feature type="region of interest" description="Disordered" evidence="3">
    <location>
        <begin position="150"/>
        <end position="171"/>
    </location>
</feature>
<feature type="region of interest" description="Disordered" evidence="3">
    <location>
        <begin position="219"/>
        <end position="245"/>
    </location>
</feature>
<feature type="compositionally biased region" description="Basic and acidic residues" evidence="3">
    <location>
        <begin position="227"/>
        <end position="242"/>
    </location>
</feature>